<gene>
    <name evidence="1" type="primary">nbaC</name>
    <name type="ordered locus">Rmet_5193</name>
</gene>
<sequence>MLTYGAPFNFPRWIDEHAHLLKPPVGNRQVWQDSDFIVTVVGGPNHRTDYHDDPLEEFFYQLRGNAYLNLWVDGRRERADLKEGDIFLLPPHVRHSPQRPEAGSACLVIERQRPAGMLDGFEWYCDACGHLVHRVEVQLKSIVTDLPPLFESFYASEDKRRCPHCGQVHPGRAA</sequence>
<keyword id="KW-0002">3D-structure</keyword>
<keyword id="KW-0223">Dioxygenase</keyword>
<keyword id="KW-0408">Iron</keyword>
<keyword id="KW-0479">Metal-binding</keyword>
<keyword id="KW-0560">Oxidoreductase</keyword>
<keyword id="KW-0614">Plasmid</keyword>
<keyword id="KW-0662">Pyridine nucleotide biosynthesis</keyword>
<keyword id="KW-1185">Reference proteome</keyword>
<geneLocation type="plasmid">
    <name>megaplasmid</name>
</geneLocation>
<name>3HAO_CUPMC</name>
<feature type="chain" id="PRO_0000245477" description="3-hydroxyanthranilate 3,4-dioxygenase">
    <location>
        <begin position="1"/>
        <end position="174"/>
    </location>
</feature>
<feature type="binding site">
    <location>
        <position position="47"/>
    </location>
    <ligand>
        <name>O2</name>
        <dbReference type="ChEBI" id="CHEBI:15379"/>
    </ligand>
</feature>
<feature type="binding site">
    <location>
        <position position="51"/>
    </location>
    <ligand>
        <name>Fe cation</name>
        <dbReference type="ChEBI" id="CHEBI:24875"/>
        <label>1</label>
        <note>catalytic</note>
    </ligand>
</feature>
<feature type="binding site">
    <location>
        <position position="57"/>
    </location>
    <ligand>
        <name>Fe cation</name>
        <dbReference type="ChEBI" id="CHEBI:24875"/>
        <label>1</label>
        <note>catalytic</note>
    </ligand>
</feature>
<feature type="binding site">
    <location>
        <position position="57"/>
    </location>
    <ligand>
        <name>substrate</name>
    </ligand>
</feature>
<feature type="binding site">
    <location>
        <position position="95"/>
    </location>
    <ligand>
        <name>Fe cation</name>
        <dbReference type="ChEBI" id="CHEBI:24875"/>
        <label>1</label>
        <note>catalytic</note>
    </ligand>
</feature>
<feature type="binding site">
    <location>
        <position position="99"/>
    </location>
    <ligand>
        <name>substrate</name>
    </ligand>
</feature>
<feature type="binding site">
    <location>
        <position position="110"/>
    </location>
    <ligand>
        <name>substrate</name>
    </ligand>
</feature>
<feature type="binding site">
    <location>
        <position position="125"/>
    </location>
    <ligand>
        <name>Fe cation</name>
        <dbReference type="ChEBI" id="CHEBI:24875"/>
        <label>2</label>
    </ligand>
</feature>
<feature type="binding site">
    <location>
        <position position="128"/>
    </location>
    <ligand>
        <name>Fe cation</name>
        <dbReference type="ChEBI" id="CHEBI:24875"/>
        <label>2</label>
    </ligand>
</feature>
<feature type="binding site">
    <location>
        <position position="162"/>
    </location>
    <ligand>
        <name>Fe cation</name>
        <dbReference type="ChEBI" id="CHEBI:24875"/>
        <label>2</label>
    </ligand>
</feature>
<feature type="binding site">
    <location>
        <position position="165"/>
    </location>
    <ligand>
        <name>Fe cation</name>
        <dbReference type="ChEBI" id="CHEBI:24875"/>
        <label>2</label>
    </ligand>
</feature>
<feature type="mutagenesis site" description="Increases KM for 3-hydroxyanthranilate 7-fold. Decreases activity 1000-fold." evidence="3">
    <original>R</original>
    <variation>A</variation>
    <location>
        <position position="47"/>
    </location>
</feature>
<feature type="mutagenesis site" description="Increases KM for 3-hydroxyanthranilate 40-fold. Decreases activity 5000-fold." evidence="3">
    <original>R</original>
    <variation>A</variation>
    <location>
        <position position="99"/>
    </location>
</feature>
<feature type="mutagenesis site" description="Decreases KM for 3-hydroxyanthranilate 2-fold. Decreases activity 2000-fold." evidence="3">
    <original>E</original>
    <variation>A</variation>
    <location>
        <position position="110"/>
    </location>
</feature>
<feature type="helix" evidence="5">
    <location>
        <begin position="10"/>
        <end position="16"/>
    </location>
</feature>
<feature type="helix" evidence="5">
    <location>
        <begin position="18"/>
        <end position="20"/>
    </location>
</feature>
<feature type="turn" evidence="5">
    <location>
        <begin position="23"/>
        <end position="25"/>
    </location>
</feature>
<feature type="strand" evidence="5">
    <location>
        <begin position="27"/>
        <end position="33"/>
    </location>
</feature>
<feature type="strand" evidence="5">
    <location>
        <begin position="35"/>
        <end position="41"/>
    </location>
</feature>
<feature type="strand" evidence="6">
    <location>
        <begin position="43"/>
        <end position="45"/>
    </location>
</feature>
<feature type="strand" evidence="5">
    <location>
        <begin position="50"/>
        <end position="52"/>
    </location>
</feature>
<feature type="strand" evidence="5">
    <location>
        <begin position="57"/>
        <end position="64"/>
    </location>
</feature>
<feature type="strand" evidence="5">
    <location>
        <begin position="66"/>
        <end position="72"/>
    </location>
</feature>
<feature type="strand" evidence="5">
    <location>
        <begin position="75"/>
        <end position="81"/>
    </location>
</feature>
<feature type="strand" evidence="5">
    <location>
        <begin position="86"/>
        <end position="89"/>
    </location>
</feature>
<feature type="strand" evidence="5">
    <location>
        <begin position="95"/>
        <end position="99"/>
    </location>
</feature>
<feature type="strand" evidence="5">
    <location>
        <begin position="105"/>
        <end position="111"/>
    </location>
</feature>
<feature type="strand" evidence="5">
    <location>
        <begin position="119"/>
        <end position="124"/>
    </location>
</feature>
<feature type="turn" evidence="5">
    <location>
        <begin position="126"/>
        <end position="128"/>
    </location>
</feature>
<feature type="strand" evidence="5">
    <location>
        <begin position="131"/>
        <end position="137"/>
    </location>
</feature>
<feature type="helix" evidence="5">
    <location>
        <begin position="142"/>
        <end position="145"/>
    </location>
</feature>
<feature type="helix" evidence="5">
    <location>
        <begin position="147"/>
        <end position="154"/>
    </location>
</feature>
<feature type="helix" evidence="5">
    <location>
        <begin position="157"/>
        <end position="160"/>
    </location>
</feature>
<feature type="turn" evidence="5">
    <location>
        <begin position="163"/>
        <end position="165"/>
    </location>
</feature>
<feature type="helix" evidence="4">
    <location>
        <begin position="171"/>
        <end position="173"/>
    </location>
</feature>
<reference key="1">
    <citation type="journal article" date="2010" name="PLoS ONE">
        <title>The complete genome sequence of Cupriavidus metallidurans strain CH34, a master survivalist in harsh and anthropogenic environments.</title>
        <authorList>
            <person name="Janssen P.J."/>
            <person name="Van Houdt R."/>
            <person name="Moors H."/>
            <person name="Monsieurs P."/>
            <person name="Morin N."/>
            <person name="Michaux A."/>
            <person name="Benotmane M.A."/>
            <person name="Leys N."/>
            <person name="Vallaeys T."/>
            <person name="Lapidus A."/>
            <person name="Monchy S."/>
            <person name="Medigue C."/>
            <person name="Taghavi S."/>
            <person name="McCorkle S."/>
            <person name="Dunn J."/>
            <person name="van der Lelie D."/>
            <person name="Mergeay M."/>
        </authorList>
    </citation>
    <scope>NUCLEOTIDE SEQUENCE [LARGE SCALE GENOMIC DNA]</scope>
    <source>
        <strain>ATCC 43123 / DSM 2839 / NBRC 102507 / CH34</strain>
    </source>
</reference>
<reference key="2">
    <citation type="journal article" date="2005" name="Biochemistry">
        <title>The mechanism of inactivation of 3-hydroxyanthranilate-3,4-dioxygenase by 4-chloro-3-hydroxyanthranilate.</title>
        <authorList>
            <person name="Colabroy K.L."/>
            <person name="Zhai H."/>
            <person name="Li T."/>
            <person name="Ge Y."/>
            <person name="Zhang Y."/>
            <person name="Liu A."/>
            <person name="Ealick S.E."/>
            <person name="McLafferty F.W."/>
            <person name="Begley T.P."/>
        </authorList>
    </citation>
    <scope>FUNCTION</scope>
    <scope>ACTIVITY REGULATION</scope>
    <scope>IDENTIFICATION BY MASS SPECTROMETRY</scope>
</reference>
<reference key="3">
    <citation type="journal article" date="2005" name="Biochemistry">
        <title>Structural studies on 3-hydroxyanthranilate-3,4-dioxygenase: the catalytic mechanism of a complex oxidation involved in NAD biosynthesis.</title>
        <authorList>
            <person name="Zhang Y."/>
            <person name="Colabroy K.L."/>
            <person name="Begley T.P."/>
            <person name="Ealick S.E."/>
        </authorList>
    </citation>
    <scope>X-RAY CRYSTALLOGRAPHY (1.9 ANGSTROMS) OF NATIVE PROTEIN AND COMPLEXES WITH SUBSTRATES OR INHIBITOR AND IRON</scope>
    <scope>COFACTOR</scope>
    <scope>KINETIC PARAMETERS</scope>
    <scope>MUTAGENESIS OF ARG-47; ARG-99 AND GLU-110</scope>
    <scope>SUBUNIT</scope>
    <scope>REACTION MECHANISM</scope>
</reference>
<dbReference type="EC" id="1.13.11.6" evidence="1"/>
<dbReference type="EMBL" id="CP000353">
    <property type="protein sequence ID" value="ABF12052.1"/>
    <property type="molecule type" value="Genomic_DNA"/>
</dbReference>
<dbReference type="RefSeq" id="WP_011519599.1">
    <property type="nucleotide sequence ID" value="NC_007974.2"/>
</dbReference>
<dbReference type="PDB" id="1YFU">
    <property type="method" value="X-ray"/>
    <property type="resolution" value="1.90 A"/>
    <property type="chains" value="A=1-174"/>
</dbReference>
<dbReference type="PDB" id="1YFW">
    <property type="method" value="X-ray"/>
    <property type="resolution" value="2.00 A"/>
    <property type="chains" value="A=1-174"/>
</dbReference>
<dbReference type="PDB" id="1YFX">
    <property type="method" value="X-ray"/>
    <property type="resolution" value="2.00 A"/>
    <property type="chains" value="A=1-174"/>
</dbReference>
<dbReference type="PDB" id="1YFY">
    <property type="method" value="X-ray"/>
    <property type="resolution" value="3.20 A"/>
    <property type="chains" value="A=1-174"/>
</dbReference>
<dbReference type="PDB" id="4HSJ">
    <property type="method" value="X-ray"/>
    <property type="resolution" value="1.88 A"/>
    <property type="chains" value="A=1-174"/>
</dbReference>
<dbReference type="PDB" id="4HSL">
    <property type="method" value="X-ray"/>
    <property type="resolution" value="2.00 A"/>
    <property type="chains" value="A=1-174"/>
</dbReference>
<dbReference type="PDB" id="4HVO">
    <property type="method" value="X-ray"/>
    <property type="resolution" value="1.75 A"/>
    <property type="chains" value="A=1-174"/>
</dbReference>
<dbReference type="PDB" id="4HVQ">
    <property type="method" value="X-ray"/>
    <property type="resolution" value="2.81 A"/>
    <property type="chains" value="A=1-154"/>
</dbReference>
<dbReference type="PDB" id="4HVR">
    <property type="method" value="X-ray"/>
    <property type="resolution" value="2.70 A"/>
    <property type="chains" value="A=1-174"/>
</dbReference>
<dbReference type="PDB" id="4I3P">
    <property type="method" value="X-ray"/>
    <property type="resolution" value="1.96 A"/>
    <property type="chains" value="A=1-174"/>
</dbReference>
<dbReference type="PDB" id="4L2N">
    <property type="method" value="X-ray"/>
    <property type="resolution" value="1.74 A"/>
    <property type="chains" value="A=1-174"/>
</dbReference>
<dbReference type="PDB" id="4R52">
    <property type="method" value="X-ray"/>
    <property type="resolution" value="1.53 A"/>
    <property type="chains" value="A=1-174"/>
</dbReference>
<dbReference type="PDB" id="4WZC">
    <property type="method" value="X-ray"/>
    <property type="resolution" value="1.84 A"/>
    <property type="chains" value="A=1-174"/>
</dbReference>
<dbReference type="PDB" id="5V26">
    <property type="method" value="X-ray"/>
    <property type="resolution" value="1.79 A"/>
    <property type="chains" value="A/B=1-174"/>
</dbReference>
<dbReference type="PDB" id="5V27">
    <property type="method" value="X-ray"/>
    <property type="resolution" value="2.35 A"/>
    <property type="chains" value="A=1-174"/>
</dbReference>
<dbReference type="PDB" id="5V28">
    <property type="method" value="X-ray"/>
    <property type="resolution" value="2.72 A"/>
    <property type="chains" value="A=1-174"/>
</dbReference>
<dbReference type="PDB" id="6BVP">
    <property type="method" value="X-ray"/>
    <property type="resolution" value="1.90 A"/>
    <property type="chains" value="A=1-174"/>
</dbReference>
<dbReference type="PDB" id="6BVQ">
    <property type="method" value="X-ray"/>
    <property type="resolution" value="2.08 A"/>
    <property type="chains" value="A=1-174"/>
</dbReference>
<dbReference type="PDB" id="6BVR">
    <property type="method" value="X-ray"/>
    <property type="resolution" value="1.90 A"/>
    <property type="chains" value="A=1-174"/>
</dbReference>
<dbReference type="PDB" id="6BVS">
    <property type="method" value="X-ray"/>
    <property type="resolution" value="2.32 A"/>
    <property type="chains" value="A=1-174"/>
</dbReference>
<dbReference type="PDB" id="6CD3">
    <property type="method" value="X-ray"/>
    <property type="resolution" value="2.61 A"/>
    <property type="chains" value="A=1-174"/>
</dbReference>
<dbReference type="PDB" id="6D60">
    <property type="method" value="X-ray"/>
    <property type="resolution" value="2.22 A"/>
    <property type="chains" value="A=1-174"/>
</dbReference>
<dbReference type="PDB" id="6D61">
    <property type="method" value="X-ray"/>
    <property type="resolution" value="1.74 A"/>
    <property type="chains" value="A=1-174"/>
</dbReference>
<dbReference type="PDB" id="6D62">
    <property type="method" value="X-ray"/>
    <property type="resolution" value="1.77 A"/>
    <property type="chains" value="A=1-174"/>
</dbReference>
<dbReference type="PDB" id="6VI5">
    <property type="method" value="X-ray"/>
    <property type="resolution" value="1.60 A"/>
    <property type="chains" value="A=1-174"/>
</dbReference>
<dbReference type="PDB" id="6VI6">
    <property type="method" value="X-ray"/>
    <property type="resolution" value="1.90 A"/>
    <property type="chains" value="A=1-174"/>
</dbReference>
<dbReference type="PDB" id="6VI7">
    <property type="method" value="X-ray"/>
    <property type="resolution" value="2.62 A"/>
    <property type="chains" value="A=1-174"/>
</dbReference>
<dbReference type="PDB" id="6VI8">
    <property type="method" value="X-ray"/>
    <property type="resolution" value="1.95 A"/>
    <property type="chains" value="A=1-174"/>
</dbReference>
<dbReference type="PDB" id="6VI9">
    <property type="method" value="X-ray"/>
    <property type="resolution" value="2.31 A"/>
    <property type="chains" value="A=1-174"/>
</dbReference>
<dbReference type="PDB" id="6VIA">
    <property type="method" value="X-ray"/>
    <property type="resolution" value="1.59 A"/>
    <property type="chains" value="A=1-174"/>
</dbReference>
<dbReference type="PDB" id="6VIB">
    <property type="method" value="X-ray"/>
    <property type="resolution" value="1.84 A"/>
    <property type="chains" value="A=1-174"/>
</dbReference>
<dbReference type="PDB" id="6X11">
    <property type="method" value="X-ray"/>
    <property type="resolution" value="2.10 A"/>
    <property type="chains" value="A=1-174"/>
</dbReference>
<dbReference type="PDBsum" id="1YFU"/>
<dbReference type="PDBsum" id="1YFW"/>
<dbReference type="PDBsum" id="1YFX"/>
<dbReference type="PDBsum" id="1YFY"/>
<dbReference type="PDBsum" id="4HSJ"/>
<dbReference type="PDBsum" id="4HSL"/>
<dbReference type="PDBsum" id="4HVO"/>
<dbReference type="PDBsum" id="4HVQ"/>
<dbReference type="PDBsum" id="4HVR"/>
<dbReference type="PDBsum" id="4I3P"/>
<dbReference type="PDBsum" id="4L2N"/>
<dbReference type="PDBsum" id="4R52"/>
<dbReference type="PDBsum" id="4WZC"/>
<dbReference type="PDBsum" id="5V26"/>
<dbReference type="PDBsum" id="5V27"/>
<dbReference type="PDBsum" id="5V28"/>
<dbReference type="PDBsum" id="6BVP"/>
<dbReference type="PDBsum" id="6BVQ"/>
<dbReference type="PDBsum" id="6BVR"/>
<dbReference type="PDBsum" id="6BVS"/>
<dbReference type="PDBsum" id="6CD3"/>
<dbReference type="PDBsum" id="6D60"/>
<dbReference type="PDBsum" id="6D61"/>
<dbReference type="PDBsum" id="6D62"/>
<dbReference type="PDBsum" id="6VI5"/>
<dbReference type="PDBsum" id="6VI6"/>
<dbReference type="PDBsum" id="6VI7"/>
<dbReference type="PDBsum" id="6VI8"/>
<dbReference type="PDBsum" id="6VI9"/>
<dbReference type="PDBsum" id="6VIA"/>
<dbReference type="PDBsum" id="6VIB"/>
<dbReference type="PDBsum" id="6X11"/>
<dbReference type="SMR" id="Q1LCS4"/>
<dbReference type="DrugBank" id="DB04598">
    <property type="generic name" value="2-AMINO-4-CHLORO-3-HYDROXYBENZOIC ACID"/>
</dbReference>
<dbReference type="KEGG" id="rme:Rmet_5193"/>
<dbReference type="eggNOG" id="COG1917">
    <property type="taxonomic scope" value="Bacteria"/>
</dbReference>
<dbReference type="HOGENOM" id="CLU_095765_0_0_4"/>
<dbReference type="SABIO-RK" id="Q1LCS4"/>
<dbReference type="UniPathway" id="UPA00253">
    <property type="reaction ID" value="UER00330"/>
</dbReference>
<dbReference type="EvolutionaryTrace" id="Q1LCS4"/>
<dbReference type="Proteomes" id="UP000002429">
    <property type="component" value="Plasmid megaplasmid CH34"/>
</dbReference>
<dbReference type="GO" id="GO:0000334">
    <property type="term" value="F:3-hydroxyanthranilate 3,4-dioxygenase activity"/>
    <property type="evidence" value="ECO:0007669"/>
    <property type="project" value="UniProtKB-UniRule"/>
</dbReference>
<dbReference type="GO" id="GO:0008198">
    <property type="term" value="F:ferrous iron binding"/>
    <property type="evidence" value="ECO:0007669"/>
    <property type="project" value="UniProtKB-UniRule"/>
</dbReference>
<dbReference type="GO" id="GO:0043420">
    <property type="term" value="P:anthranilate metabolic process"/>
    <property type="evidence" value="ECO:0007669"/>
    <property type="project" value="UniProtKB-UniRule"/>
</dbReference>
<dbReference type="GO" id="GO:0006569">
    <property type="term" value="P:L-tryptophan catabolic process"/>
    <property type="evidence" value="ECO:0007669"/>
    <property type="project" value="UniProtKB-UniRule"/>
</dbReference>
<dbReference type="GO" id="GO:0009435">
    <property type="term" value="P:NAD biosynthetic process"/>
    <property type="evidence" value="ECO:0007669"/>
    <property type="project" value="UniProtKB-UniPathway"/>
</dbReference>
<dbReference type="GO" id="GO:0019805">
    <property type="term" value="P:quinolinate biosynthetic process"/>
    <property type="evidence" value="ECO:0007669"/>
    <property type="project" value="UniProtKB-UniRule"/>
</dbReference>
<dbReference type="CDD" id="cd06123">
    <property type="entry name" value="cupin_HAO"/>
    <property type="match status" value="1"/>
</dbReference>
<dbReference type="Gene3D" id="2.60.120.10">
    <property type="entry name" value="Jelly Rolls"/>
    <property type="match status" value="1"/>
</dbReference>
<dbReference type="HAMAP" id="MF_00825">
    <property type="entry name" value="3_HAO"/>
    <property type="match status" value="1"/>
</dbReference>
<dbReference type="InterPro" id="IPR010329">
    <property type="entry name" value="3hydroanth_dOase"/>
</dbReference>
<dbReference type="InterPro" id="IPR014710">
    <property type="entry name" value="RmlC-like_jellyroll"/>
</dbReference>
<dbReference type="InterPro" id="IPR011051">
    <property type="entry name" value="RmlC_Cupin_sf"/>
</dbReference>
<dbReference type="NCBIfam" id="TIGR03037">
    <property type="entry name" value="anthran_nbaC"/>
    <property type="match status" value="1"/>
</dbReference>
<dbReference type="NCBIfam" id="NF009763">
    <property type="entry name" value="PRK13264.1"/>
    <property type="match status" value="1"/>
</dbReference>
<dbReference type="PANTHER" id="PTHR15497">
    <property type="entry name" value="3-HYDROXYANTHRANILATE 3,4-DIOXYGENASE"/>
    <property type="match status" value="1"/>
</dbReference>
<dbReference type="PANTHER" id="PTHR15497:SF1">
    <property type="entry name" value="3-HYDROXYANTHRANILATE 3,4-DIOXYGENASE"/>
    <property type="match status" value="1"/>
</dbReference>
<dbReference type="Pfam" id="PF06052">
    <property type="entry name" value="3-HAO"/>
    <property type="match status" value="1"/>
</dbReference>
<dbReference type="SUPFAM" id="SSF51182">
    <property type="entry name" value="RmlC-like cupins"/>
    <property type="match status" value="1"/>
</dbReference>
<proteinExistence type="evidence at protein level"/>
<comment type="function">
    <text evidence="1 2">Catalyzes the oxidative ring opening of 3-hydroxyanthranilate to 2-amino-3-carboxymuconate semialdehyde, which spontaneously cyclizes to quinolinate.</text>
</comment>
<comment type="catalytic activity">
    <reaction evidence="1">
        <text>3-hydroxyanthranilate + O2 = (2Z,4Z)-2-amino-3-carboxymuconate 6-semialdehyde</text>
        <dbReference type="Rhea" id="RHEA:17953"/>
        <dbReference type="ChEBI" id="CHEBI:15379"/>
        <dbReference type="ChEBI" id="CHEBI:36559"/>
        <dbReference type="ChEBI" id="CHEBI:77612"/>
        <dbReference type="EC" id="1.13.11.6"/>
    </reaction>
</comment>
<comment type="cofactor">
    <cofactor evidence="1 3">
        <name>Fe(2+)</name>
        <dbReference type="ChEBI" id="CHEBI:29033"/>
    </cofactor>
    <text evidence="1 3">Binds 2 Fe(2+) ions per subunit.</text>
</comment>
<comment type="activity regulation">
    <text evidence="2">Inhibited by 4-chloro-3-hydroxyanthranilate. Mechanism of inactivation involves the oxidation of the catalytic active site Fe(2+) to the catalytically inactive Fe(3+) oxidation state, superoxide production, and formation of two disulfide bonds between Cys-125 and Cys-128, and Cys-162 and Cys-165. Enzyme can be reactivated under reducing conditions.</text>
</comment>
<comment type="biophysicochemical properties">
    <kinetics>
        <KM evidence="3">22.4 uM for 3-hydroxyanthranilate</KM>
    </kinetics>
</comment>
<comment type="pathway">
    <text evidence="1">Cofactor biosynthesis; NAD(+) biosynthesis; quinolinate from L-kynurenine: step 3/3.</text>
</comment>
<comment type="subunit">
    <text evidence="1 3">Homodimer.</text>
</comment>
<comment type="similarity">
    <text evidence="1">Belongs to the 3-HAO family.</text>
</comment>
<protein>
    <recommendedName>
        <fullName evidence="1">3-hydroxyanthranilate 3,4-dioxygenase</fullName>
        <ecNumber evidence="1">1.13.11.6</ecNumber>
    </recommendedName>
    <alternativeName>
        <fullName evidence="1">3-hydroxyanthranilate oxygenase</fullName>
        <shortName evidence="1">3-HAO</shortName>
    </alternativeName>
    <alternativeName>
        <fullName evidence="1">3-hydroxyanthranilic acid dioxygenase</fullName>
        <shortName evidence="1">HAD</shortName>
    </alternativeName>
</protein>
<organism>
    <name type="scientific">Cupriavidus metallidurans (strain ATCC 43123 / DSM 2839 / NBRC 102507 / CH34)</name>
    <name type="common">Ralstonia metallidurans</name>
    <dbReference type="NCBI Taxonomy" id="266264"/>
    <lineage>
        <taxon>Bacteria</taxon>
        <taxon>Pseudomonadati</taxon>
        <taxon>Pseudomonadota</taxon>
        <taxon>Betaproteobacteria</taxon>
        <taxon>Burkholderiales</taxon>
        <taxon>Burkholderiaceae</taxon>
        <taxon>Cupriavidus</taxon>
    </lineage>
</organism>
<evidence type="ECO:0000255" key="1">
    <source>
        <dbReference type="HAMAP-Rule" id="MF_00825"/>
    </source>
</evidence>
<evidence type="ECO:0000269" key="2">
    <source>
    </source>
</evidence>
<evidence type="ECO:0000269" key="3">
    <source>
    </source>
</evidence>
<evidence type="ECO:0007829" key="4">
    <source>
        <dbReference type="PDB" id="1YFW"/>
    </source>
</evidence>
<evidence type="ECO:0007829" key="5">
    <source>
        <dbReference type="PDB" id="4R52"/>
    </source>
</evidence>
<evidence type="ECO:0007829" key="6">
    <source>
        <dbReference type="PDB" id="6VIA"/>
    </source>
</evidence>
<accession>Q1LCS4</accession>